<keyword id="KW-0067">ATP-binding</keyword>
<keyword id="KW-0963">Cytoplasm</keyword>
<keyword id="KW-0235">DNA replication</keyword>
<keyword id="KW-0238">DNA-binding</keyword>
<keyword id="KW-0446">Lipid-binding</keyword>
<keyword id="KW-0547">Nucleotide-binding</keyword>
<keyword id="KW-1185">Reference proteome</keyword>
<organism>
    <name type="scientific">Chromobacterium violaceum (strain ATCC 12472 / DSM 30191 / JCM 1249 / CCUG 213 / NBRC 12614 / NCIMB 9131 / NCTC 9757 / MK)</name>
    <dbReference type="NCBI Taxonomy" id="243365"/>
    <lineage>
        <taxon>Bacteria</taxon>
        <taxon>Pseudomonadati</taxon>
        <taxon>Pseudomonadota</taxon>
        <taxon>Betaproteobacteria</taxon>
        <taxon>Neisseriales</taxon>
        <taxon>Chromobacteriaceae</taxon>
        <taxon>Chromobacterium</taxon>
    </lineage>
</organism>
<feature type="chain" id="PRO_0000114164" description="Chromosomal replication initiator protein DnaA">
    <location>
        <begin position="1"/>
        <end position="467"/>
    </location>
</feature>
<feature type="region of interest" description="Domain I, interacts with DnaA modulators" evidence="1">
    <location>
        <begin position="1"/>
        <end position="79"/>
    </location>
</feature>
<feature type="region of interest" description="Domain II" evidence="1">
    <location>
        <begin position="79"/>
        <end position="129"/>
    </location>
</feature>
<feature type="region of interest" description="Disordered" evidence="2">
    <location>
        <begin position="84"/>
        <end position="126"/>
    </location>
</feature>
<feature type="region of interest" description="Domain III, AAA+ region" evidence="1">
    <location>
        <begin position="130"/>
        <end position="347"/>
    </location>
</feature>
<feature type="region of interest" description="Domain IV, binds dsDNA" evidence="1">
    <location>
        <begin position="348"/>
        <end position="467"/>
    </location>
</feature>
<feature type="compositionally biased region" description="Low complexity" evidence="2">
    <location>
        <begin position="102"/>
        <end position="121"/>
    </location>
</feature>
<feature type="binding site" evidence="1">
    <location>
        <position position="175"/>
    </location>
    <ligand>
        <name>ATP</name>
        <dbReference type="ChEBI" id="CHEBI:30616"/>
    </ligand>
</feature>
<feature type="binding site" evidence="1">
    <location>
        <position position="177"/>
    </location>
    <ligand>
        <name>ATP</name>
        <dbReference type="ChEBI" id="CHEBI:30616"/>
    </ligand>
</feature>
<feature type="binding site" evidence="1">
    <location>
        <position position="178"/>
    </location>
    <ligand>
        <name>ATP</name>
        <dbReference type="ChEBI" id="CHEBI:30616"/>
    </ligand>
</feature>
<feature type="binding site" evidence="1">
    <location>
        <position position="179"/>
    </location>
    <ligand>
        <name>ATP</name>
        <dbReference type="ChEBI" id="CHEBI:30616"/>
    </ligand>
</feature>
<dbReference type="EMBL" id="AE016825">
    <property type="protein sequence ID" value="AAQ57681.1"/>
    <property type="molecule type" value="Genomic_DNA"/>
</dbReference>
<dbReference type="RefSeq" id="WP_011133556.1">
    <property type="nucleotide sequence ID" value="NC_005085.1"/>
</dbReference>
<dbReference type="SMR" id="Q7P259"/>
<dbReference type="STRING" id="243365.CV_0001"/>
<dbReference type="GeneID" id="66366112"/>
<dbReference type="KEGG" id="cvi:CV_0001"/>
<dbReference type="eggNOG" id="COG0593">
    <property type="taxonomic scope" value="Bacteria"/>
</dbReference>
<dbReference type="HOGENOM" id="CLU_026910_0_1_4"/>
<dbReference type="OrthoDB" id="9807019at2"/>
<dbReference type="Proteomes" id="UP000001424">
    <property type="component" value="Chromosome"/>
</dbReference>
<dbReference type="GO" id="GO:0005737">
    <property type="term" value="C:cytoplasm"/>
    <property type="evidence" value="ECO:0007669"/>
    <property type="project" value="UniProtKB-SubCell"/>
</dbReference>
<dbReference type="GO" id="GO:0005886">
    <property type="term" value="C:plasma membrane"/>
    <property type="evidence" value="ECO:0007669"/>
    <property type="project" value="TreeGrafter"/>
</dbReference>
<dbReference type="GO" id="GO:0005524">
    <property type="term" value="F:ATP binding"/>
    <property type="evidence" value="ECO:0007669"/>
    <property type="project" value="UniProtKB-UniRule"/>
</dbReference>
<dbReference type="GO" id="GO:0016887">
    <property type="term" value="F:ATP hydrolysis activity"/>
    <property type="evidence" value="ECO:0007669"/>
    <property type="project" value="InterPro"/>
</dbReference>
<dbReference type="GO" id="GO:0003688">
    <property type="term" value="F:DNA replication origin binding"/>
    <property type="evidence" value="ECO:0007669"/>
    <property type="project" value="UniProtKB-UniRule"/>
</dbReference>
<dbReference type="GO" id="GO:0008289">
    <property type="term" value="F:lipid binding"/>
    <property type="evidence" value="ECO:0007669"/>
    <property type="project" value="UniProtKB-KW"/>
</dbReference>
<dbReference type="GO" id="GO:0006270">
    <property type="term" value="P:DNA replication initiation"/>
    <property type="evidence" value="ECO:0007669"/>
    <property type="project" value="UniProtKB-UniRule"/>
</dbReference>
<dbReference type="GO" id="GO:0006275">
    <property type="term" value="P:regulation of DNA replication"/>
    <property type="evidence" value="ECO:0007669"/>
    <property type="project" value="UniProtKB-UniRule"/>
</dbReference>
<dbReference type="CDD" id="cd00009">
    <property type="entry name" value="AAA"/>
    <property type="match status" value="1"/>
</dbReference>
<dbReference type="CDD" id="cd06571">
    <property type="entry name" value="Bac_DnaA_C"/>
    <property type="match status" value="1"/>
</dbReference>
<dbReference type="FunFam" id="1.10.8.60:FF:000003">
    <property type="entry name" value="Chromosomal replication initiator protein DnaA"/>
    <property type="match status" value="1"/>
</dbReference>
<dbReference type="FunFam" id="3.40.50.300:FF:000668">
    <property type="entry name" value="Chromosomal replication initiator protein DnaA"/>
    <property type="match status" value="1"/>
</dbReference>
<dbReference type="Gene3D" id="1.10.1750.10">
    <property type="match status" value="1"/>
</dbReference>
<dbReference type="Gene3D" id="1.10.8.60">
    <property type="match status" value="1"/>
</dbReference>
<dbReference type="Gene3D" id="3.30.300.180">
    <property type="match status" value="1"/>
</dbReference>
<dbReference type="Gene3D" id="3.40.50.300">
    <property type="entry name" value="P-loop containing nucleotide triphosphate hydrolases"/>
    <property type="match status" value="1"/>
</dbReference>
<dbReference type="HAMAP" id="MF_00377">
    <property type="entry name" value="DnaA_bact"/>
    <property type="match status" value="1"/>
</dbReference>
<dbReference type="InterPro" id="IPR003593">
    <property type="entry name" value="AAA+_ATPase"/>
</dbReference>
<dbReference type="InterPro" id="IPR001957">
    <property type="entry name" value="Chromosome_initiator_DnaA"/>
</dbReference>
<dbReference type="InterPro" id="IPR020591">
    <property type="entry name" value="Chromosome_initiator_DnaA-like"/>
</dbReference>
<dbReference type="InterPro" id="IPR018312">
    <property type="entry name" value="Chromosome_initiator_DnaA_CS"/>
</dbReference>
<dbReference type="InterPro" id="IPR013159">
    <property type="entry name" value="DnaA_C"/>
</dbReference>
<dbReference type="InterPro" id="IPR013317">
    <property type="entry name" value="DnaA_dom"/>
</dbReference>
<dbReference type="InterPro" id="IPR024633">
    <property type="entry name" value="DnaA_N_dom"/>
</dbReference>
<dbReference type="InterPro" id="IPR038454">
    <property type="entry name" value="DnaA_N_sf"/>
</dbReference>
<dbReference type="InterPro" id="IPR027417">
    <property type="entry name" value="P-loop_NTPase"/>
</dbReference>
<dbReference type="InterPro" id="IPR010921">
    <property type="entry name" value="Trp_repressor/repl_initiator"/>
</dbReference>
<dbReference type="NCBIfam" id="TIGR00362">
    <property type="entry name" value="DnaA"/>
    <property type="match status" value="1"/>
</dbReference>
<dbReference type="PANTHER" id="PTHR30050">
    <property type="entry name" value="CHROMOSOMAL REPLICATION INITIATOR PROTEIN DNAA"/>
    <property type="match status" value="1"/>
</dbReference>
<dbReference type="PANTHER" id="PTHR30050:SF2">
    <property type="entry name" value="CHROMOSOMAL REPLICATION INITIATOR PROTEIN DNAA"/>
    <property type="match status" value="1"/>
</dbReference>
<dbReference type="Pfam" id="PF00308">
    <property type="entry name" value="Bac_DnaA"/>
    <property type="match status" value="1"/>
</dbReference>
<dbReference type="Pfam" id="PF08299">
    <property type="entry name" value="Bac_DnaA_C"/>
    <property type="match status" value="1"/>
</dbReference>
<dbReference type="Pfam" id="PF11638">
    <property type="entry name" value="DnaA_N"/>
    <property type="match status" value="1"/>
</dbReference>
<dbReference type="PRINTS" id="PR00051">
    <property type="entry name" value="DNAA"/>
</dbReference>
<dbReference type="SMART" id="SM00382">
    <property type="entry name" value="AAA"/>
    <property type="match status" value="1"/>
</dbReference>
<dbReference type="SMART" id="SM00760">
    <property type="entry name" value="Bac_DnaA_C"/>
    <property type="match status" value="1"/>
</dbReference>
<dbReference type="SUPFAM" id="SSF52540">
    <property type="entry name" value="P-loop containing nucleoside triphosphate hydrolases"/>
    <property type="match status" value="1"/>
</dbReference>
<dbReference type="SUPFAM" id="SSF48295">
    <property type="entry name" value="TrpR-like"/>
    <property type="match status" value="1"/>
</dbReference>
<dbReference type="PROSITE" id="PS01008">
    <property type="entry name" value="DNAA"/>
    <property type="match status" value="1"/>
</dbReference>
<gene>
    <name evidence="1" type="primary">dnaA</name>
    <name type="ordered locus">CV_0001</name>
</gene>
<proteinExistence type="inferred from homology"/>
<name>DNAA_CHRVO</name>
<accession>Q7P259</accession>
<comment type="function">
    <text evidence="1">Plays an essential role in the initiation and regulation of chromosomal replication. ATP-DnaA binds to the origin of replication (oriC) to initiate formation of the DNA replication initiation complex once per cell cycle. Binds the DnaA box (a 9 base pair repeat at the origin) and separates the double-stranded (ds)DNA. Forms a right-handed helical filament on oriC DNA; dsDNA binds to the exterior of the filament while single-stranded (ss)DNA is stabiized in the filament's interior. The ATP-DnaA-oriC complex binds and stabilizes one strand of the AT-rich DNA unwinding element (DUE), permitting loading of DNA polymerase. After initiation quickly degrades to an ADP-DnaA complex that is not apt for DNA replication. Binds acidic phospholipids.</text>
</comment>
<comment type="subunit">
    <text evidence="1">Oligomerizes as a right-handed, spiral filament on DNA at oriC.</text>
</comment>
<comment type="subcellular location">
    <subcellularLocation>
        <location evidence="1">Cytoplasm</location>
    </subcellularLocation>
</comment>
<comment type="domain">
    <text evidence="1">Domain I is involved in oligomerization and binding regulators, domain II is flexibile and of varying length in different bacteria, domain III forms the AAA+ region, while domain IV binds dsDNA.</text>
</comment>
<comment type="similarity">
    <text evidence="1">Belongs to the DnaA family.</text>
</comment>
<protein>
    <recommendedName>
        <fullName evidence="1">Chromosomal replication initiator protein DnaA</fullName>
    </recommendedName>
</protein>
<reference key="1">
    <citation type="journal article" date="2003" name="Proc. Natl. Acad. Sci. U.S.A.">
        <title>The complete genome sequence of Chromobacterium violaceum reveals remarkable and exploitable bacterial adaptability.</title>
        <authorList>
            <person name="Vasconcelos A.T.R."/>
            <person name="de Almeida D.F."/>
            <person name="Hungria M."/>
            <person name="Guimaraes C.T."/>
            <person name="Antonio R.V."/>
            <person name="Almeida F.C."/>
            <person name="de Almeida L.G.P."/>
            <person name="de Almeida R."/>
            <person name="Alves-Gomes J.A."/>
            <person name="Andrade E.M."/>
            <person name="Araripe J."/>
            <person name="de Araujo M.F.F."/>
            <person name="Astolfi-Filho S."/>
            <person name="Azevedo V."/>
            <person name="Baptista A.J."/>
            <person name="Bataus L.A.M."/>
            <person name="Batista J.S."/>
            <person name="Belo A."/>
            <person name="van den Berg C."/>
            <person name="Bogo M."/>
            <person name="Bonatto S."/>
            <person name="Bordignon J."/>
            <person name="Brigido M.M."/>
            <person name="Brito C.A."/>
            <person name="Brocchi M."/>
            <person name="Burity H.A."/>
            <person name="Camargo A.A."/>
            <person name="Cardoso D.D.P."/>
            <person name="Carneiro N.P."/>
            <person name="Carraro D.M."/>
            <person name="Carvalho C.M.B."/>
            <person name="Cascardo J.C.M."/>
            <person name="Cavada B.S."/>
            <person name="Chueire L.M.O."/>
            <person name="Creczynski-Pasa T.B."/>
            <person name="Cunha-Junior N.C."/>
            <person name="Fagundes N."/>
            <person name="Falcao C.L."/>
            <person name="Fantinatti F."/>
            <person name="Farias I.P."/>
            <person name="Felipe M.S.S."/>
            <person name="Ferrari L.P."/>
            <person name="Ferro J.A."/>
            <person name="Ferro M.I.T."/>
            <person name="Franco G.R."/>
            <person name="Freitas N.S.A."/>
            <person name="Furlan L.R."/>
            <person name="Gazzinelli R.T."/>
            <person name="Gomes E.A."/>
            <person name="Goncalves P.R."/>
            <person name="Grangeiro T.B."/>
            <person name="Grattapaglia D."/>
            <person name="Grisard E.C."/>
            <person name="Hanna E.S."/>
            <person name="Jardim S.N."/>
            <person name="Laurino J."/>
            <person name="Leoi L.C.T."/>
            <person name="Lima L.F.A."/>
            <person name="Loureiro M.F."/>
            <person name="Lyra M.C.C.P."/>
            <person name="Madeira H.M.F."/>
            <person name="Manfio G.P."/>
            <person name="Maranhao A.Q."/>
            <person name="Martins W.S."/>
            <person name="di Mauro S.M.Z."/>
            <person name="de Medeiros S.R.B."/>
            <person name="Meissner R.V."/>
            <person name="Moreira M.A.M."/>
            <person name="Nascimento F.F."/>
            <person name="Nicolas M.F."/>
            <person name="Oliveira J.G."/>
            <person name="Oliveira S.C."/>
            <person name="Paixao R.F.C."/>
            <person name="Parente J.A."/>
            <person name="Pedrosa F.O."/>
            <person name="Pena S.D.J."/>
            <person name="Pereira J.O."/>
            <person name="Pereira M."/>
            <person name="Pinto L.S.R.C."/>
            <person name="Pinto L.S."/>
            <person name="Porto J.I.R."/>
            <person name="Potrich D.P."/>
            <person name="Ramalho-Neto C.E."/>
            <person name="Reis A.M.M."/>
            <person name="Rigo L.U."/>
            <person name="Rondinelli E."/>
            <person name="Santos E.B.P."/>
            <person name="Santos F.R."/>
            <person name="Schneider M.P.C."/>
            <person name="Seuanez H.N."/>
            <person name="Silva A.M.R."/>
            <person name="da Silva A.L.C."/>
            <person name="Silva D.W."/>
            <person name="Silva R."/>
            <person name="Simoes I.C."/>
            <person name="Simon D."/>
            <person name="Soares C.M.A."/>
            <person name="Soares R.B.A."/>
            <person name="Souza E.M."/>
            <person name="Souza K.R.L."/>
            <person name="Souza R.C."/>
            <person name="Steffens M.B.R."/>
            <person name="Steindel M."/>
            <person name="Teixeira S.R."/>
            <person name="Urmenyi T."/>
            <person name="Vettore A."/>
            <person name="Wassem R."/>
            <person name="Zaha A."/>
            <person name="Simpson A.J.G."/>
        </authorList>
    </citation>
    <scope>NUCLEOTIDE SEQUENCE [LARGE SCALE GENOMIC DNA]</scope>
    <source>
        <strain>ATCC 12472 / DSM 30191 / JCM 1249 / CCUG 213 / NBRC 12614 / NCIMB 9131 / NCTC 9757 / MK</strain>
    </source>
</reference>
<sequence length="467" mass="51987">MTELDQFWPACLARLEAELSSQQFNTWIKPLTAEAGDEGIALFAPNRFIMQFIKDRFLPRIEELAVELVGELPVELRLGAPTARPAAPVAGNSQPKAKEPAKAAASAPAAPSPAKQAAVKAIGGSHESTRLNPSFTFDTLVTGKGNQLARAAAMQIAENPGDQAYNPLFVYGGVGLGKTHLIQAIGNHVFQKNPQAKIRYIHAERYVADIMRAYQHKAFDEFKRYYHSLDLLLIDDIQFFAGKNRTQEEFFYAFNALIEGGKQVIMTCDSYPKQIEGMEERLISRFSWGLTVEIQPPELEMRVAILMKKAEADSIKLEHNVAFFIAQNVRSNVRELEGALKRVVAYARFTSQNITLELVKEALKDILAAGNRQVTVDAIQKTVAEYYKIKLSDMHSKKRSRDIARPRQVAMALAKELTQLSLPNIGDAFGGRDHTTVLHACKTITEMRASDADIAHDYEALLSMLRN</sequence>
<evidence type="ECO:0000255" key="1">
    <source>
        <dbReference type="HAMAP-Rule" id="MF_00377"/>
    </source>
</evidence>
<evidence type="ECO:0000256" key="2">
    <source>
        <dbReference type="SAM" id="MobiDB-lite"/>
    </source>
</evidence>